<name>PFKAM_MACFA</name>
<dbReference type="EC" id="2.7.1.11" evidence="6"/>
<dbReference type="EMBL" id="AB125188">
    <property type="protein sequence ID" value="BAD51976.1"/>
    <property type="molecule type" value="mRNA"/>
</dbReference>
<dbReference type="SMR" id="Q60HD9"/>
<dbReference type="STRING" id="9541.ENSMFAP00000037481"/>
<dbReference type="GlyCosmos" id="Q60HD9">
    <property type="glycosylation" value="1 site, No reported glycans"/>
</dbReference>
<dbReference type="eggNOG" id="KOG2440">
    <property type="taxonomic scope" value="Eukaryota"/>
</dbReference>
<dbReference type="UniPathway" id="UPA00109">
    <property type="reaction ID" value="UER00182"/>
</dbReference>
<dbReference type="Proteomes" id="UP000233100">
    <property type="component" value="Unplaced"/>
</dbReference>
<dbReference type="GO" id="GO:0005945">
    <property type="term" value="C:6-phosphofructokinase complex"/>
    <property type="evidence" value="ECO:0007669"/>
    <property type="project" value="TreeGrafter"/>
</dbReference>
<dbReference type="GO" id="GO:0016020">
    <property type="term" value="C:membrane"/>
    <property type="evidence" value="ECO:0007669"/>
    <property type="project" value="TreeGrafter"/>
</dbReference>
<dbReference type="GO" id="GO:0003872">
    <property type="term" value="F:6-phosphofructokinase activity"/>
    <property type="evidence" value="ECO:0000250"/>
    <property type="project" value="UniProtKB"/>
</dbReference>
<dbReference type="GO" id="GO:0016208">
    <property type="term" value="F:AMP binding"/>
    <property type="evidence" value="ECO:0007669"/>
    <property type="project" value="TreeGrafter"/>
</dbReference>
<dbReference type="GO" id="GO:0005524">
    <property type="term" value="F:ATP binding"/>
    <property type="evidence" value="ECO:0007669"/>
    <property type="project" value="UniProtKB-KW"/>
</dbReference>
<dbReference type="GO" id="GO:0070095">
    <property type="term" value="F:fructose-6-phosphate binding"/>
    <property type="evidence" value="ECO:0007669"/>
    <property type="project" value="TreeGrafter"/>
</dbReference>
<dbReference type="GO" id="GO:0042802">
    <property type="term" value="F:identical protein binding"/>
    <property type="evidence" value="ECO:0007669"/>
    <property type="project" value="TreeGrafter"/>
</dbReference>
<dbReference type="GO" id="GO:0046872">
    <property type="term" value="F:metal ion binding"/>
    <property type="evidence" value="ECO:0007669"/>
    <property type="project" value="UniProtKB-KW"/>
</dbReference>
<dbReference type="GO" id="GO:0048029">
    <property type="term" value="F:monosaccharide binding"/>
    <property type="evidence" value="ECO:0007669"/>
    <property type="project" value="TreeGrafter"/>
</dbReference>
<dbReference type="GO" id="GO:0061621">
    <property type="term" value="P:canonical glycolysis"/>
    <property type="evidence" value="ECO:0007669"/>
    <property type="project" value="TreeGrafter"/>
</dbReference>
<dbReference type="GO" id="GO:0030388">
    <property type="term" value="P:fructose 1,6-bisphosphate metabolic process"/>
    <property type="evidence" value="ECO:0007669"/>
    <property type="project" value="TreeGrafter"/>
</dbReference>
<dbReference type="GO" id="GO:0006002">
    <property type="term" value="P:fructose 6-phosphate metabolic process"/>
    <property type="evidence" value="ECO:0007669"/>
    <property type="project" value="InterPro"/>
</dbReference>
<dbReference type="CDD" id="cd00764">
    <property type="entry name" value="Eukaryotic_PFK"/>
    <property type="match status" value="1"/>
</dbReference>
<dbReference type="FunFam" id="3.40.50.450:FF:000004">
    <property type="entry name" value="ATP-dependent 6-phosphofructokinase"/>
    <property type="match status" value="1"/>
</dbReference>
<dbReference type="FunFam" id="3.40.50.460:FF:000001">
    <property type="entry name" value="ATP-dependent 6-phosphofructokinase"/>
    <property type="match status" value="1"/>
</dbReference>
<dbReference type="FunFam" id="3.40.50.460:FF:000003">
    <property type="entry name" value="ATP-dependent 6-phosphofructokinase"/>
    <property type="match status" value="1"/>
</dbReference>
<dbReference type="FunFam" id="3.40.50.450:FF:000043">
    <property type="entry name" value="ATP-dependent 6-phosphofructokinase, platelet type"/>
    <property type="match status" value="1"/>
</dbReference>
<dbReference type="Gene3D" id="3.40.50.450">
    <property type="match status" value="2"/>
</dbReference>
<dbReference type="Gene3D" id="3.40.50.460">
    <property type="entry name" value="Phosphofructokinase domain"/>
    <property type="match status" value="2"/>
</dbReference>
<dbReference type="HAMAP" id="MF_03184">
    <property type="entry name" value="Phosphofructokinase_I_E"/>
    <property type="match status" value="1"/>
</dbReference>
<dbReference type="InterPro" id="IPR009161">
    <property type="entry name" value="6-Pfructokinase_euk"/>
</dbReference>
<dbReference type="InterPro" id="IPR022953">
    <property type="entry name" value="ATP_PFK"/>
</dbReference>
<dbReference type="InterPro" id="IPR041914">
    <property type="entry name" value="PFK_vert-type"/>
</dbReference>
<dbReference type="InterPro" id="IPR015912">
    <property type="entry name" value="Phosphofructokinase_CS"/>
</dbReference>
<dbReference type="InterPro" id="IPR000023">
    <property type="entry name" value="Phosphofructokinase_dom"/>
</dbReference>
<dbReference type="InterPro" id="IPR035966">
    <property type="entry name" value="PKF_sf"/>
</dbReference>
<dbReference type="NCBIfam" id="TIGR02478">
    <property type="entry name" value="6PF1K_euk"/>
    <property type="match status" value="1"/>
</dbReference>
<dbReference type="PANTHER" id="PTHR13697:SF59">
    <property type="entry name" value="ATP-DEPENDENT 6-PHOSPHOFRUCTOKINASE, MUSCLE TYPE"/>
    <property type="match status" value="1"/>
</dbReference>
<dbReference type="PANTHER" id="PTHR13697">
    <property type="entry name" value="PHOSPHOFRUCTOKINASE"/>
    <property type="match status" value="1"/>
</dbReference>
<dbReference type="Pfam" id="PF00365">
    <property type="entry name" value="PFK"/>
    <property type="match status" value="2"/>
</dbReference>
<dbReference type="PIRSF" id="PIRSF000533">
    <property type="entry name" value="ATP_PFK_euk"/>
    <property type="match status" value="1"/>
</dbReference>
<dbReference type="PRINTS" id="PR00476">
    <property type="entry name" value="PHFRCTKINASE"/>
</dbReference>
<dbReference type="SUPFAM" id="SSF53784">
    <property type="entry name" value="Phosphofructokinase"/>
    <property type="match status" value="2"/>
</dbReference>
<dbReference type="PROSITE" id="PS00433">
    <property type="entry name" value="PHOSPHOFRUCTOKINASE"/>
    <property type="match status" value="2"/>
</dbReference>
<keyword id="KW-0007">Acetylation</keyword>
<keyword id="KW-0021">Allosteric enzyme</keyword>
<keyword id="KW-0067">ATP-binding</keyword>
<keyword id="KW-0963">Cytoplasm</keyword>
<keyword id="KW-0324">Glycolysis</keyword>
<keyword id="KW-0325">Glycoprotein</keyword>
<keyword id="KW-0379">Hydroxylation</keyword>
<keyword id="KW-0418">Kinase</keyword>
<keyword id="KW-0460">Magnesium</keyword>
<keyword id="KW-0479">Metal-binding</keyword>
<keyword id="KW-0547">Nucleotide-binding</keyword>
<keyword id="KW-0597">Phosphoprotein</keyword>
<keyword id="KW-1185">Reference proteome</keyword>
<keyword id="KW-0808">Transferase</keyword>
<organism>
    <name type="scientific">Macaca fascicularis</name>
    <name type="common">Crab-eating macaque</name>
    <name type="synonym">Cynomolgus monkey</name>
    <dbReference type="NCBI Taxonomy" id="9541"/>
    <lineage>
        <taxon>Eukaryota</taxon>
        <taxon>Metazoa</taxon>
        <taxon>Chordata</taxon>
        <taxon>Craniata</taxon>
        <taxon>Vertebrata</taxon>
        <taxon>Euteleostomi</taxon>
        <taxon>Mammalia</taxon>
        <taxon>Eutheria</taxon>
        <taxon>Euarchontoglires</taxon>
        <taxon>Primates</taxon>
        <taxon>Haplorrhini</taxon>
        <taxon>Catarrhini</taxon>
        <taxon>Cercopithecidae</taxon>
        <taxon>Cercopithecinae</taxon>
        <taxon>Macaca</taxon>
    </lineage>
</organism>
<proteinExistence type="evidence at transcript level"/>
<reference key="1">
    <citation type="submission" date="2003-10" db="EMBL/GenBank/DDBJ databases">
        <title>Isolation and characterization of cDNA for macaque neurological disease genes.</title>
        <authorList>
            <person name="Kusuda J."/>
            <person name="Osada N."/>
            <person name="Tanuma R."/>
            <person name="Hirata M."/>
            <person name="Sugano S."/>
            <person name="Hashimoto K."/>
        </authorList>
    </citation>
    <scope>NUCLEOTIDE SEQUENCE [LARGE SCALE MRNA]</scope>
    <source>
        <tissue>Temporal cortex</tissue>
    </source>
</reference>
<feature type="initiator methionine" description="Removed" evidence="2">
    <location>
        <position position="1"/>
    </location>
</feature>
<feature type="chain" id="PRO_0000112017" description="ATP-dependent 6-phosphofructokinase, muscle type">
    <location>
        <begin position="2"/>
        <end position="780"/>
    </location>
</feature>
<feature type="region of interest" description="N-terminal catalytic PFK domain 1">
    <location>
        <begin position="2"/>
        <end position="390"/>
    </location>
</feature>
<feature type="region of interest" description="Interdomain linker">
    <location>
        <begin position="391"/>
        <end position="401"/>
    </location>
</feature>
<feature type="region of interest" description="C-terminal regulatory PFK domain 2">
    <location>
        <begin position="402"/>
        <end position="780"/>
    </location>
</feature>
<feature type="active site" description="Proton acceptor" evidence="6">
    <location>
        <position position="166"/>
    </location>
</feature>
<feature type="binding site" evidence="6">
    <location>
        <position position="25"/>
    </location>
    <ligand>
        <name>ATP</name>
        <dbReference type="ChEBI" id="CHEBI:30616"/>
    </ligand>
</feature>
<feature type="binding site" evidence="6">
    <location>
        <begin position="88"/>
        <end position="89"/>
    </location>
    <ligand>
        <name>ATP</name>
        <dbReference type="ChEBI" id="CHEBI:30616"/>
    </ligand>
</feature>
<feature type="binding site" evidence="6">
    <location>
        <begin position="118"/>
        <end position="121"/>
    </location>
    <ligand>
        <name>ATP</name>
        <dbReference type="ChEBI" id="CHEBI:30616"/>
    </ligand>
</feature>
<feature type="binding site" evidence="6">
    <location>
        <position position="119"/>
    </location>
    <ligand>
        <name>Mg(2+)</name>
        <dbReference type="ChEBI" id="CHEBI:18420"/>
        <note>catalytic</note>
    </ligand>
</feature>
<feature type="binding site" description="in other chain" evidence="6">
    <location>
        <begin position="164"/>
        <end position="166"/>
    </location>
    <ligand>
        <name>substrate</name>
        <note>ligand shared between dimeric partners</note>
    </ligand>
</feature>
<feature type="binding site" evidence="6">
    <location>
        <position position="201"/>
    </location>
    <ligand>
        <name>substrate</name>
        <note>ligand shared between dimeric partners</note>
    </ligand>
</feature>
<feature type="binding site" description="in other chain" evidence="6">
    <location>
        <begin position="208"/>
        <end position="210"/>
    </location>
    <ligand>
        <name>substrate</name>
        <note>ligand shared between dimeric partners</note>
    </ligand>
</feature>
<feature type="binding site" description="in other chain" evidence="6">
    <location>
        <position position="264"/>
    </location>
    <ligand>
        <name>substrate</name>
        <note>ligand shared between dimeric partners</note>
    </ligand>
</feature>
<feature type="binding site" evidence="6">
    <location>
        <position position="292"/>
    </location>
    <ligand>
        <name>substrate</name>
        <note>ligand shared between dimeric partners</note>
    </ligand>
</feature>
<feature type="binding site" description="in other chain" evidence="6">
    <location>
        <begin position="298"/>
        <end position="301"/>
    </location>
    <ligand>
        <name>substrate</name>
        <note>ligand shared between dimeric partners</note>
    </ligand>
</feature>
<feature type="binding site" description="in other chain" evidence="6">
    <location>
        <position position="471"/>
    </location>
    <ligand>
        <name>beta-D-fructose 2,6-bisphosphate</name>
        <dbReference type="ChEBI" id="CHEBI:58579"/>
        <note>allosteric activator; ligand shared between dimeric partners</note>
    </ligand>
</feature>
<feature type="binding site" description="in other chain" evidence="6">
    <location>
        <begin position="528"/>
        <end position="532"/>
    </location>
    <ligand>
        <name>beta-D-fructose 2,6-bisphosphate</name>
        <dbReference type="ChEBI" id="CHEBI:58579"/>
        <note>allosteric activator; ligand shared between dimeric partners</note>
    </ligand>
</feature>
<feature type="binding site" evidence="6">
    <location>
        <position position="566"/>
    </location>
    <ligand>
        <name>beta-D-fructose 2,6-bisphosphate</name>
        <dbReference type="ChEBI" id="CHEBI:58579"/>
        <note>allosteric activator; ligand shared between dimeric partners</note>
    </ligand>
</feature>
<feature type="binding site" description="in other chain" evidence="6">
    <location>
        <begin position="573"/>
        <end position="575"/>
    </location>
    <ligand>
        <name>beta-D-fructose 2,6-bisphosphate</name>
        <dbReference type="ChEBI" id="CHEBI:58579"/>
        <note>allosteric activator; ligand shared between dimeric partners</note>
    </ligand>
</feature>
<feature type="binding site" description="in other chain" evidence="6">
    <location>
        <position position="629"/>
    </location>
    <ligand>
        <name>beta-D-fructose 2,6-bisphosphate</name>
        <dbReference type="ChEBI" id="CHEBI:58579"/>
        <note>allosteric activator; ligand shared between dimeric partners</note>
    </ligand>
</feature>
<feature type="binding site" evidence="6">
    <location>
        <position position="655"/>
    </location>
    <ligand>
        <name>beta-D-fructose 2,6-bisphosphate</name>
        <dbReference type="ChEBI" id="CHEBI:58579"/>
        <note>allosteric activator; ligand shared between dimeric partners</note>
    </ligand>
</feature>
<feature type="binding site" description="in other chain" evidence="6">
    <location>
        <begin position="661"/>
        <end position="664"/>
    </location>
    <ligand>
        <name>beta-D-fructose 2,6-bisphosphate</name>
        <dbReference type="ChEBI" id="CHEBI:58579"/>
        <note>allosteric activator; ligand shared between dimeric partners</note>
    </ligand>
</feature>
<feature type="binding site" description="in other chain" evidence="6">
    <location>
        <position position="735"/>
    </location>
    <ligand>
        <name>beta-D-fructose 2,6-bisphosphate</name>
        <dbReference type="ChEBI" id="CHEBI:58579"/>
        <note>allosteric activator; ligand shared between dimeric partners</note>
    </ligand>
</feature>
<feature type="modified residue" description="N-acetylthreonine" evidence="2">
    <location>
        <position position="2"/>
    </location>
</feature>
<feature type="modified residue" description="Phosphoserine" evidence="5">
    <location>
        <position position="133"/>
    </location>
</feature>
<feature type="modified residue" description="Phosphoserine" evidence="4">
    <location>
        <position position="377"/>
    </location>
</feature>
<feature type="modified residue" description="N6-(2-hydroxyisobutyryl)lysine" evidence="3">
    <location>
        <position position="557"/>
    </location>
</feature>
<feature type="modified residue" description="Phosphoserine" evidence="3">
    <location>
        <position position="667"/>
    </location>
</feature>
<feature type="modified residue" description="Phosphoserine" evidence="2">
    <location>
        <position position="775"/>
    </location>
</feature>
<feature type="glycosylation site" description="O-linked (GlcNAc) serine" evidence="1">
    <location>
        <position position="530"/>
    </location>
</feature>
<gene>
    <name type="primary">PFKM</name>
    <name type="ORF">QtrA-16732</name>
</gene>
<protein>
    <recommendedName>
        <fullName evidence="6">ATP-dependent 6-phosphofructokinase, muscle type</fullName>
        <shortName evidence="6">ATP-PFK</shortName>
        <shortName>PFK-M</shortName>
        <ecNumber evidence="6">2.7.1.11</ecNumber>
    </recommendedName>
    <alternativeName>
        <fullName>6-phosphofructokinase type A</fullName>
    </alternativeName>
    <alternativeName>
        <fullName>Phosphofructo-1-kinase isozyme A</fullName>
        <shortName>PFK-A</shortName>
    </alternativeName>
    <alternativeName>
        <fullName evidence="6">Phosphohexokinase</fullName>
    </alternativeName>
</protein>
<accession>Q60HD9</accession>
<comment type="function">
    <text evidence="6">Catalyzes the phosphorylation of D-fructose 6-phosphate to fructose 1,6-bisphosphate by ATP, the first committing step of glycolysis.</text>
</comment>
<comment type="catalytic activity">
    <reaction evidence="6">
        <text>beta-D-fructose 6-phosphate + ATP = beta-D-fructose 1,6-bisphosphate + ADP + H(+)</text>
        <dbReference type="Rhea" id="RHEA:16109"/>
        <dbReference type="ChEBI" id="CHEBI:15378"/>
        <dbReference type="ChEBI" id="CHEBI:30616"/>
        <dbReference type="ChEBI" id="CHEBI:32966"/>
        <dbReference type="ChEBI" id="CHEBI:57634"/>
        <dbReference type="ChEBI" id="CHEBI:456216"/>
        <dbReference type="EC" id="2.7.1.11"/>
    </reaction>
</comment>
<comment type="cofactor">
    <cofactor evidence="6">
        <name>Mg(2+)</name>
        <dbReference type="ChEBI" id="CHEBI:18420"/>
    </cofactor>
</comment>
<comment type="activity regulation">
    <text evidence="6">Allosterically activated by ADP, AMP, or fructose 2,6-bisphosphate, and allosterically inhibited by ATP or citrate.</text>
</comment>
<comment type="pathway">
    <text evidence="6">Carbohydrate degradation; glycolysis; D-glyceraldehyde 3-phosphate and glycerone phosphate from D-glucose: step 3/4.</text>
</comment>
<comment type="subunit">
    <text evidence="4 6 7">Homo- and heterotetramers (By similarity). Phosphofructokinase (PFK) enzyme functions as a tetramer composed of different combinations of 3 types of subunits, called PFKM (M), PFKL (L) and PFKP (P). The composition of the PFK tetramer differs according to the tissue type it is present in. The kinetic and regulatory properties of the tetrameric enzyme are dependent on the subunit composition, hence can vary across tissues (Probable). Interacts (via C-terminus) with HK1 (via N-terminal spermatogenic cell-specific region) (By similarity).</text>
</comment>
<comment type="subcellular location">
    <subcellularLocation>
        <location evidence="6">Cytoplasm</location>
    </subcellularLocation>
</comment>
<comment type="PTM">
    <text evidence="1">GlcNAcylation decreases enzyme activity.</text>
</comment>
<comment type="similarity">
    <text evidence="6">Belongs to the phosphofructokinase type A (PFKA) family. ATP-dependent PFK group I subfamily. Eukaryotic two domain clade 'E' sub-subfamily.</text>
</comment>
<sequence length="780" mass="85124">MTHEEHHAAKTLGIGKAIAVLTSGGDAQGMNAAVRAVVRVGIFTGARVFFVHEGYQGLVDGGDNIKEATWESVSMMLQLGGTVIGSARCKDFREREGRLRAAYNLVKRGITNLCVIGGDGSLTGADTFRSEWSELLGDLQKAGKITDEEATKSSYLNIVGLVGSIDNDFCGTDMTIGTDSALHRIIEIVDAITTTAQSHQRTFVLEVMGRHCGYLALVTSLSCGADWVFIPECPPDDDWEEHLCRRLSETRTRGSRLNIIIVAEGAIDRNGKPITSEDIKNLVVKRLGYDTRVTVLGHVQRGGTPSAFDRILGSRMGVEAVMALLEGTPDTPACVVSLSGNQAVRLPLMECVQVTKDVTKAMEEKKFDEALKLRGRSFMNNWEVYKLLAHVRPPVSKSGSHTVAVMNVGAPAAGMNAAVRSTVRIGLIQGNRVLVVHDGFEGLAKGQIEEAGWSYVGGWTGQGGSKLGTKRTLPKKSFEQISANITKFNIQGLVIIGGFEAYTGGLELMEGRKQFDELCIPFVVIPATVSNNVPGSDFSVGADTALNTICTTCDRIKQSAAGTKRRVFIIETMGGYCGYLATMAGLAAGADAAYIFEEPFTIRDLQANVEHLVQKMKTTVKRGLVLRNEKCNENYTTDFIFNLYSEEGKGIFDSRKNVLGHMQQGGSPTPFDRNFATKMGAKAMNWMSGIIKESYRNGRIFANTPDSGCVLGMRKRALLFQPVTELQGQTDFEHRIPKEQWWLKLRPILKILAKYEIDLDTSDHAHLEHITRKRSGEGAV</sequence>
<evidence type="ECO:0000250" key="1"/>
<evidence type="ECO:0000250" key="2">
    <source>
        <dbReference type="UniProtKB" id="P00511"/>
    </source>
</evidence>
<evidence type="ECO:0000250" key="3">
    <source>
        <dbReference type="UniProtKB" id="P08237"/>
    </source>
</evidence>
<evidence type="ECO:0000250" key="4">
    <source>
        <dbReference type="UniProtKB" id="P47857"/>
    </source>
</evidence>
<evidence type="ECO:0000250" key="5">
    <source>
        <dbReference type="UniProtKB" id="P47858"/>
    </source>
</evidence>
<evidence type="ECO:0000255" key="6">
    <source>
        <dbReference type="HAMAP-Rule" id="MF_03184"/>
    </source>
</evidence>
<evidence type="ECO:0000305" key="7"/>